<keyword id="KW-0029">Amino-acid transport</keyword>
<keyword id="KW-0997">Cell inner membrane</keyword>
<keyword id="KW-1003">Cell membrane</keyword>
<keyword id="KW-0472">Membrane</keyword>
<keyword id="KW-0769">Symport</keyword>
<keyword id="KW-0812">Transmembrane</keyword>
<keyword id="KW-1133">Transmembrane helix</keyword>
<keyword id="KW-0813">Transport</keyword>
<evidence type="ECO:0000255" key="1">
    <source>
        <dbReference type="HAMAP-Rule" id="MF_01582"/>
    </source>
</evidence>
<reference key="1">
    <citation type="submission" date="2006-12" db="EMBL/GenBank/DDBJ databases">
        <title>Complete sequence of Shewanella sp. W3-18-1.</title>
        <authorList>
            <consortium name="US DOE Joint Genome Institute"/>
            <person name="Copeland A."/>
            <person name="Lucas S."/>
            <person name="Lapidus A."/>
            <person name="Barry K."/>
            <person name="Detter J.C."/>
            <person name="Glavina del Rio T."/>
            <person name="Hammon N."/>
            <person name="Israni S."/>
            <person name="Dalin E."/>
            <person name="Tice H."/>
            <person name="Pitluck S."/>
            <person name="Chain P."/>
            <person name="Malfatti S."/>
            <person name="Shin M."/>
            <person name="Vergez L."/>
            <person name="Schmutz J."/>
            <person name="Larimer F."/>
            <person name="Land M."/>
            <person name="Hauser L."/>
            <person name="Kyrpides N."/>
            <person name="Lykidis A."/>
            <person name="Tiedje J."/>
            <person name="Richardson P."/>
        </authorList>
    </citation>
    <scope>NUCLEOTIDE SEQUENCE [LARGE SCALE GENOMIC DNA]</scope>
    <source>
        <strain>W3-18-1</strain>
    </source>
</reference>
<comment type="function">
    <text evidence="1">Involved in the import of serine and threonine into the cell, with the concomitant import of sodium (symport system).</text>
</comment>
<comment type="catalytic activity">
    <reaction evidence="1">
        <text>L-serine(in) + Na(+)(in) = L-serine(out) + Na(+)(out)</text>
        <dbReference type="Rhea" id="RHEA:29575"/>
        <dbReference type="ChEBI" id="CHEBI:29101"/>
        <dbReference type="ChEBI" id="CHEBI:33384"/>
    </reaction>
    <physiologicalReaction direction="right-to-left" evidence="1">
        <dbReference type="Rhea" id="RHEA:29577"/>
    </physiologicalReaction>
</comment>
<comment type="catalytic activity">
    <reaction evidence="1">
        <text>L-threonine(in) + Na(+)(in) = L-threonine(out) + Na(+)(out)</text>
        <dbReference type="Rhea" id="RHEA:69999"/>
        <dbReference type="ChEBI" id="CHEBI:29101"/>
        <dbReference type="ChEBI" id="CHEBI:57926"/>
    </reaction>
    <physiologicalReaction direction="right-to-left" evidence="1">
        <dbReference type="Rhea" id="RHEA:70001"/>
    </physiologicalReaction>
</comment>
<comment type="subcellular location">
    <subcellularLocation>
        <location evidence="1">Cell inner membrane</location>
        <topology evidence="1">Multi-pass membrane protein</topology>
    </subcellularLocation>
</comment>
<comment type="similarity">
    <text evidence="1">Belongs to the dicarboxylate/amino acid:cation symporter (DAACS) (TC 2.A.23) family.</text>
</comment>
<organism>
    <name type="scientific">Shewanella sp. (strain W3-18-1)</name>
    <dbReference type="NCBI Taxonomy" id="351745"/>
    <lineage>
        <taxon>Bacteria</taxon>
        <taxon>Pseudomonadati</taxon>
        <taxon>Pseudomonadota</taxon>
        <taxon>Gammaproteobacteria</taxon>
        <taxon>Alteromonadales</taxon>
        <taxon>Shewanellaceae</taxon>
        <taxon>Shewanella</taxon>
    </lineage>
</organism>
<gene>
    <name evidence="1" type="primary">sstT</name>
    <name type="ordered locus">Sputw3181_1516</name>
</gene>
<sequence>MKQESSLLAKLANGSLVLQILLGIAAGVILASFSQDAAKQVAFLGSLFVGALKAIAPILVFILVASSIANQKKNTQTNMRPIVVLYLFGTFAAALTAVVLSSIFPTNLVLVAGIEGTSPPQGIGEVINTLLFKLVDNPVNALMTGNYIGILAWGVGLGLALHHANDSTKQVFADMSHGISQMVRFIIRLAPIGIFGLVAATFAETGFAAIAGYAQLLAVLLSAMAIIALIVNPLIVYVKIKRNPYPLVLRCLRESGVTAFFTRSSAANIPVNMALCEKLNLNKDTYSVSIPLGATINMGGAAITITVLTLAAVHTLGIQVDLPTALLLSVVAAVSACGASGVAGGSLLLIPLACSLFGISNDIAMQVVAVGFIIGVIQDAAETALNSSTDVIFTAAACEAAENKAKLG</sequence>
<dbReference type="EMBL" id="CP000503">
    <property type="protein sequence ID" value="ABM24354.1"/>
    <property type="molecule type" value="Genomic_DNA"/>
</dbReference>
<dbReference type="RefSeq" id="WP_011788855.1">
    <property type="nucleotide sequence ID" value="NC_008750.1"/>
</dbReference>
<dbReference type="SMR" id="A1RI59"/>
<dbReference type="GeneID" id="67444079"/>
<dbReference type="KEGG" id="shw:Sputw3181_1516"/>
<dbReference type="HOGENOM" id="CLU_044581_0_0_6"/>
<dbReference type="Proteomes" id="UP000002597">
    <property type="component" value="Chromosome"/>
</dbReference>
<dbReference type="GO" id="GO:0005886">
    <property type="term" value="C:plasma membrane"/>
    <property type="evidence" value="ECO:0007669"/>
    <property type="project" value="UniProtKB-SubCell"/>
</dbReference>
<dbReference type="GO" id="GO:0005295">
    <property type="term" value="F:neutral L-amino acid:sodium symporter activity"/>
    <property type="evidence" value="ECO:0007669"/>
    <property type="project" value="TreeGrafter"/>
</dbReference>
<dbReference type="GO" id="GO:0032329">
    <property type="term" value="P:serine transport"/>
    <property type="evidence" value="ECO:0007669"/>
    <property type="project" value="InterPro"/>
</dbReference>
<dbReference type="GO" id="GO:0015826">
    <property type="term" value="P:threonine transport"/>
    <property type="evidence" value="ECO:0007669"/>
    <property type="project" value="InterPro"/>
</dbReference>
<dbReference type="FunFam" id="1.10.3860.10:FF:000003">
    <property type="entry name" value="Serine/threonine transporter sstT"/>
    <property type="match status" value="1"/>
</dbReference>
<dbReference type="Gene3D" id="1.10.3860.10">
    <property type="entry name" value="Sodium:dicarboxylate symporter"/>
    <property type="match status" value="1"/>
</dbReference>
<dbReference type="HAMAP" id="MF_01582">
    <property type="entry name" value="Ser_Thr_transp_SstT"/>
    <property type="match status" value="1"/>
</dbReference>
<dbReference type="InterPro" id="IPR001991">
    <property type="entry name" value="Na-dicarboxylate_symporter"/>
</dbReference>
<dbReference type="InterPro" id="IPR036458">
    <property type="entry name" value="Na:dicarbo_symporter_sf"/>
</dbReference>
<dbReference type="InterPro" id="IPR023025">
    <property type="entry name" value="Ser_Thr_transp_SstT"/>
</dbReference>
<dbReference type="NCBIfam" id="NF010151">
    <property type="entry name" value="PRK13628.1"/>
    <property type="match status" value="1"/>
</dbReference>
<dbReference type="PANTHER" id="PTHR42865">
    <property type="entry name" value="PROTON/GLUTAMATE-ASPARTATE SYMPORTER"/>
    <property type="match status" value="1"/>
</dbReference>
<dbReference type="PANTHER" id="PTHR42865:SF8">
    <property type="entry name" value="SERINE_THREONINE TRANSPORTER SSTT"/>
    <property type="match status" value="1"/>
</dbReference>
<dbReference type="Pfam" id="PF00375">
    <property type="entry name" value="SDF"/>
    <property type="match status" value="1"/>
</dbReference>
<dbReference type="PRINTS" id="PR00173">
    <property type="entry name" value="EDTRNSPORT"/>
</dbReference>
<dbReference type="SUPFAM" id="SSF118215">
    <property type="entry name" value="Proton glutamate symport protein"/>
    <property type="match status" value="1"/>
</dbReference>
<protein>
    <recommendedName>
        <fullName evidence="1">Serine/threonine transporter SstT</fullName>
    </recommendedName>
    <alternativeName>
        <fullName evidence="1">Na(+)/serine-threonine symporter</fullName>
    </alternativeName>
</protein>
<feature type="chain" id="PRO_0000309128" description="Serine/threonine transporter SstT">
    <location>
        <begin position="1"/>
        <end position="408"/>
    </location>
</feature>
<feature type="transmembrane region" description="Helical" evidence="1">
    <location>
        <begin position="11"/>
        <end position="31"/>
    </location>
</feature>
<feature type="transmembrane region" description="Helical" evidence="1">
    <location>
        <begin position="43"/>
        <end position="63"/>
    </location>
</feature>
<feature type="transmembrane region" description="Helical" evidence="1">
    <location>
        <begin position="81"/>
        <end position="101"/>
    </location>
</feature>
<feature type="transmembrane region" description="Helical" evidence="1">
    <location>
        <begin position="141"/>
        <end position="161"/>
    </location>
</feature>
<feature type="transmembrane region" description="Helical" evidence="1">
    <location>
        <begin position="192"/>
        <end position="212"/>
    </location>
</feature>
<feature type="transmembrane region" description="Helical" evidence="1">
    <location>
        <begin position="216"/>
        <end position="236"/>
    </location>
</feature>
<feature type="transmembrane region" description="Helical" evidence="1">
    <location>
        <begin position="298"/>
        <end position="318"/>
    </location>
</feature>
<feature type="transmembrane region" description="Helical" evidence="1">
    <location>
        <begin position="330"/>
        <end position="350"/>
    </location>
</feature>
<feature type="transmembrane region" description="Helical" evidence="1">
    <location>
        <begin position="357"/>
        <end position="377"/>
    </location>
</feature>
<proteinExistence type="inferred from homology"/>
<name>SSTT_SHESW</name>
<accession>A1RI59</accession>